<name>NUOH_WOLSU</name>
<keyword id="KW-0997">Cell inner membrane</keyword>
<keyword id="KW-1003">Cell membrane</keyword>
<keyword id="KW-0472">Membrane</keyword>
<keyword id="KW-0520">NAD</keyword>
<keyword id="KW-0874">Quinone</keyword>
<keyword id="KW-1185">Reference proteome</keyword>
<keyword id="KW-1278">Translocase</keyword>
<keyword id="KW-0812">Transmembrane</keyword>
<keyword id="KW-1133">Transmembrane helix</keyword>
<keyword id="KW-0830">Ubiquinone</keyword>
<proteinExistence type="inferred from homology"/>
<protein>
    <recommendedName>
        <fullName evidence="1">NADH-quinone oxidoreductase subunit H</fullName>
        <ecNumber evidence="1">7.1.1.-</ecNumber>
    </recommendedName>
    <alternativeName>
        <fullName evidence="1">NADH dehydrogenase I subunit H</fullName>
    </alternativeName>
    <alternativeName>
        <fullName evidence="1">NDH-1 subunit H</fullName>
    </alternativeName>
</protein>
<evidence type="ECO:0000255" key="1">
    <source>
        <dbReference type="HAMAP-Rule" id="MF_01350"/>
    </source>
</evidence>
<gene>
    <name evidence="1" type="primary">nuoH</name>
    <name type="ordered locus">WS0481</name>
</gene>
<reference key="1">
    <citation type="journal article" date="2003" name="Proc. Natl. Acad. Sci. U.S.A.">
        <title>Complete genome sequence and analysis of Wolinella succinogenes.</title>
        <authorList>
            <person name="Baar C."/>
            <person name="Eppinger M."/>
            <person name="Raddatz G."/>
            <person name="Simon J."/>
            <person name="Lanz C."/>
            <person name="Klimmek O."/>
            <person name="Nandakumar R."/>
            <person name="Gross R."/>
            <person name="Rosinus A."/>
            <person name="Keller H."/>
            <person name="Jagtap P."/>
            <person name="Linke B."/>
            <person name="Meyer F."/>
            <person name="Lederer H."/>
            <person name="Schuster S.C."/>
        </authorList>
    </citation>
    <scope>NUCLEOTIDE SEQUENCE [LARGE SCALE GENOMIC DNA]</scope>
    <source>
        <strain>ATCC 29543 / DSM 1740 / CCUG 13145 / JCM 31913 / LMG 7466 / NCTC 11488 / FDC 602W</strain>
    </source>
</reference>
<feature type="chain" id="PRO_0000240118" description="NADH-quinone oxidoreductase subunit H">
    <location>
        <begin position="1"/>
        <end position="329"/>
    </location>
</feature>
<feature type="transmembrane region" description="Helical" evidence="1">
    <location>
        <begin position="9"/>
        <end position="29"/>
    </location>
</feature>
<feature type="transmembrane region" description="Helical" evidence="1">
    <location>
        <begin position="79"/>
        <end position="99"/>
    </location>
</feature>
<feature type="transmembrane region" description="Helical" evidence="1">
    <location>
        <begin position="117"/>
        <end position="137"/>
    </location>
</feature>
<feature type="transmembrane region" description="Helical" evidence="1">
    <location>
        <begin position="162"/>
        <end position="182"/>
    </location>
</feature>
<feature type="transmembrane region" description="Helical" evidence="1">
    <location>
        <begin position="188"/>
        <end position="208"/>
    </location>
</feature>
<feature type="transmembrane region" description="Helical" evidence="1">
    <location>
        <begin position="243"/>
        <end position="263"/>
    </location>
</feature>
<feature type="transmembrane region" description="Helical" evidence="1">
    <location>
        <begin position="269"/>
        <end position="289"/>
    </location>
</feature>
<feature type="transmembrane region" description="Helical" evidence="1">
    <location>
        <begin position="309"/>
        <end position="329"/>
    </location>
</feature>
<accession>Q7MA43</accession>
<comment type="function">
    <text evidence="1">NDH-1 shuttles electrons from NADH, via FMN and iron-sulfur (Fe-S) centers, to quinones in the respiratory chain. The immediate electron acceptor for the enzyme in this species is believed to be ubiquinone. Couples the redox reaction to proton translocation (for every two electrons transferred, four hydrogen ions are translocated across the cytoplasmic membrane), and thus conserves the redox energy in a proton gradient. This subunit may bind ubiquinone.</text>
</comment>
<comment type="catalytic activity">
    <reaction evidence="1">
        <text>a quinone + NADH + 5 H(+)(in) = a quinol + NAD(+) + 4 H(+)(out)</text>
        <dbReference type="Rhea" id="RHEA:57888"/>
        <dbReference type="ChEBI" id="CHEBI:15378"/>
        <dbReference type="ChEBI" id="CHEBI:24646"/>
        <dbReference type="ChEBI" id="CHEBI:57540"/>
        <dbReference type="ChEBI" id="CHEBI:57945"/>
        <dbReference type="ChEBI" id="CHEBI:132124"/>
    </reaction>
</comment>
<comment type="subunit">
    <text evidence="1">NDH-1 is composed of 14 different subunits. Subunits NuoA, H, J, K, L, M, N constitute the membrane sector of the complex.</text>
</comment>
<comment type="subcellular location">
    <subcellularLocation>
        <location evidence="1">Cell inner membrane</location>
        <topology evidence="1">Multi-pass membrane protein</topology>
    </subcellularLocation>
</comment>
<comment type="similarity">
    <text evidence="1">Belongs to the complex I subunit 1 family.</text>
</comment>
<organism>
    <name type="scientific">Wolinella succinogenes (strain ATCC 29543 / DSM 1740 / CCUG 13145 / JCM 31913 / LMG 7466 / NCTC 11488 / FDC 602W)</name>
    <name type="common">Vibrio succinogenes</name>
    <dbReference type="NCBI Taxonomy" id="273121"/>
    <lineage>
        <taxon>Bacteria</taxon>
        <taxon>Pseudomonadati</taxon>
        <taxon>Campylobacterota</taxon>
        <taxon>Epsilonproteobacteria</taxon>
        <taxon>Campylobacterales</taxon>
        <taxon>Helicobacteraceae</taxon>
        <taxon>Wolinella</taxon>
    </lineage>
</organism>
<sequence>MTPYIIETILKVLVVVAIFSALAGFLTYVERKVLAFMQRRLGPMHVGPYGVLQILADGIKLFTKEDIVPVGANQTIFKIAPVISAATAFIAMSAVPFFPEFELFGHTVRPIIADINVGILFVLGVGAVGMYGPLLAGMSSGNKWSLLGAARATVQLLSFEVVSGLSILAPLMMVGSLSLIEINNYQSGGIFDWLVWSQPLAFLLFLIAGYAELNRTPFDLLEHEAEIVAGFATEYSGMRWGMFFIGEYANMITLAFLVVLLFFGGFNPLWFIPGGIAILLKVAVFLFLFLWVRAAWPHIRPDQLMWVCWKVLMPLALLNIVLTGIVLIL</sequence>
<dbReference type="EC" id="7.1.1.-" evidence="1"/>
<dbReference type="EMBL" id="BX571658">
    <property type="protein sequence ID" value="CAE09621.1"/>
    <property type="molecule type" value="Genomic_DNA"/>
</dbReference>
<dbReference type="RefSeq" id="WP_011138421.1">
    <property type="nucleotide sequence ID" value="NC_005090.1"/>
</dbReference>
<dbReference type="SMR" id="Q7MA43"/>
<dbReference type="STRING" id="273121.WS0481"/>
<dbReference type="KEGG" id="wsu:WS0481"/>
<dbReference type="eggNOG" id="COG1005">
    <property type="taxonomic scope" value="Bacteria"/>
</dbReference>
<dbReference type="HOGENOM" id="CLU_015134_0_1_7"/>
<dbReference type="Proteomes" id="UP000000422">
    <property type="component" value="Chromosome"/>
</dbReference>
<dbReference type="GO" id="GO:0005886">
    <property type="term" value="C:plasma membrane"/>
    <property type="evidence" value="ECO:0007669"/>
    <property type="project" value="UniProtKB-SubCell"/>
</dbReference>
<dbReference type="GO" id="GO:0003954">
    <property type="term" value="F:NADH dehydrogenase activity"/>
    <property type="evidence" value="ECO:0007669"/>
    <property type="project" value="TreeGrafter"/>
</dbReference>
<dbReference type="GO" id="GO:0016655">
    <property type="term" value="F:oxidoreductase activity, acting on NAD(P)H, quinone or similar compound as acceptor"/>
    <property type="evidence" value="ECO:0007669"/>
    <property type="project" value="UniProtKB-UniRule"/>
</dbReference>
<dbReference type="GO" id="GO:0048038">
    <property type="term" value="F:quinone binding"/>
    <property type="evidence" value="ECO:0007669"/>
    <property type="project" value="UniProtKB-KW"/>
</dbReference>
<dbReference type="GO" id="GO:0009060">
    <property type="term" value="P:aerobic respiration"/>
    <property type="evidence" value="ECO:0007669"/>
    <property type="project" value="TreeGrafter"/>
</dbReference>
<dbReference type="HAMAP" id="MF_01350">
    <property type="entry name" value="NDH1_NuoH"/>
    <property type="match status" value="1"/>
</dbReference>
<dbReference type="InterPro" id="IPR001694">
    <property type="entry name" value="NADH_UbQ_OxRdtase_su1/FPO"/>
</dbReference>
<dbReference type="InterPro" id="IPR018086">
    <property type="entry name" value="NADH_UbQ_OxRdtase_su1_CS"/>
</dbReference>
<dbReference type="NCBIfam" id="NF004741">
    <property type="entry name" value="PRK06076.1-2"/>
    <property type="match status" value="1"/>
</dbReference>
<dbReference type="PANTHER" id="PTHR11432">
    <property type="entry name" value="NADH DEHYDROGENASE SUBUNIT 1"/>
    <property type="match status" value="1"/>
</dbReference>
<dbReference type="PANTHER" id="PTHR11432:SF3">
    <property type="entry name" value="NADH-UBIQUINONE OXIDOREDUCTASE CHAIN 1"/>
    <property type="match status" value="1"/>
</dbReference>
<dbReference type="Pfam" id="PF00146">
    <property type="entry name" value="NADHdh"/>
    <property type="match status" value="1"/>
</dbReference>
<dbReference type="PROSITE" id="PS00667">
    <property type="entry name" value="COMPLEX1_ND1_1"/>
    <property type="match status" value="1"/>
</dbReference>